<comment type="function">
    <text evidence="1">Binds together with bS18 to 16S ribosomal RNA.</text>
</comment>
<comment type="similarity">
    <text evidence="1">Belongs to the bacterial ribosomal protein bS6 family.</text>
</comment>
<evidence type="ECO:0000255" key="1">
    <source>
        <dbReference type="HAMAP-Rule" id="MF_00360"/>
    </source>
</evidence>
<evidence type="ECO:0000305" key="2"/>
<dbReference type="EMBL" id="AE008691">
    <property type="protein sequence ID" value="AAM25885.1"/>
    <property type="molecule type" value="Genomic_DNA"/>
</dbReference>
<dbReference type="RefSeq" id="WP_011026750.1">
    <property type="nucleotide sequence ID" value="NZ_JANUCV010000001.1"/>
</dbReference>
<dbReference type="SMR" id="Q8R6M1"/>
<dbReference type="STRING" id="273068.TTE2781"/>
<dbReference type="KEGG" id="tte:TTE2781"/>
<dbReference type="eggNOG" id="COG0360">
    <property type="taxonomic scope" value="Bacteria"/>
</dbReference>
<dbReference type="HOGENOM" id="CLU_113441_5_1_9"/>
<dbReference type="OrthoDB" id="9812702at2"/>
<dbReference type="Proteomes" id="UP000000555">
    <property type="component" value="Chromosome"/>
</dbReference>
<dbReference type="GO" id="GO:0005737">
    <property type="term" value="C:cytoplasm"/>
    <property type="evidence" value="ECO:0007669"/>
    <property type="project" value="UniProtKB-ARBA"/>
</dbReference>
<dbReference type="GO" id="GO:1990904">
    <property type="term" value="C:ribonucleoprotein complex"/>
    <property type="evidence" value="ECO:0007669"/>
    <property type="project" value="UniProtKB-KW"/>
</dbReference>
<dbReference type="GO" id="GO:0005840">
    <property type="term" value="C:ribosome"/>
    <property type="evidence" value="ECO:0007669"/>
    <property type="project" value="UniProtKB-KW"/>
</dbReference>
<dbReference type="GO" id="GO:0070181">
    <property type="term" value="F:small ribosomal subunit rRNA binding"/>
    <property type="evidence" value="ECO:0007669"/>
    <property type="project" value="TreeGrafter"/>
</dbReference>
<dbReference type="GO" id="GO:0003735">
    <property type="term" value="F:structural constituent of ribosome"/>
    <property type="evidence" value="ECO:0007669"/>
    <property type="project" value="InterPro"/>
</dbReference>
<dbReference type="GO" id="GO:0006412">
    <property type="term" value="P:translation"/>
    <property type="evidence" value="ECO:0007669"/>
    <property type="project" value="UniProtKB-UniRule"/>
</dbReference>
<dbReference type="CDD" id="cd00473">
    <property type="entry name" value="bS6"/>
    <property type="match status" value="1"/>
</dbReference>
<dbReference type="FunFam" id="3.30.70.60:FF:000002">
    <property type="entry name" value="30S ribosomal protein S6"/>
    <property type="match status" value="1"/>
</dbReference>
<dbReference type="Gene3D" id="3.30.70.60">
    <property type="match status" value="1"/>
</dbReference>
<dbReference type="HAMAP" id="MF_00360">
    <property type="entry name" value="Ribosomal_bS6"/>
    <property type="match status" value="1"/>
</dbReference>
<dbReference type="InterPro" id="IPR000529">
    <property type="entry name" value="Ribosomal_bS6"/>
</dbReference>
<dbReference type="InterPro" id="IPR035980">
    <property type="entry name" value="Ribosomal_bS6_sf"/>
</dbReference>
<dbReference type="InterPro" id="IPR020814">
    <property type="entry name" value="Ribosomal_S6_plastid/chlpt"/>
</dbReference>
<dbReference type="InterPro" id="IPR014717">
    <property type="entry name" value="Transl_elong_EF1B/ribsomal_bS6"/>
</dbReference>
<dbReference type="NCBIfam" id="TIGR00166">
    <property type="entry name" value="S6"/>
    <property type="match status" value="1"/>
</dbReference>
<dbReference type="PANTHER" id="PTHR21011">
    <property type="entry name" value="MITOCHONDRIAL 28S RIBOSOMAL PROTEIN S6"/>
    <property type="match status" value="1"/>
</dbReference>
<dbReference type="PANTHER" id="PTHR21011:SF1">
    <property type="entry name" value="SMALL RIBOSOMAL SUBUNIT PROTEIN BS6M"/>
    <property type="match status" value="1"/>
</dbReference>
<dbReference type="Pfam" id="PF01250">
    <property type="entry name" value="Ribosomal_S6"/>
    <property type="match status" value="1"/>
</dbReference>
<dbReference type="SUPFAM" id="SSF54995">
    <property type="entry name" value="Ribosomal protein S6"/>
    <property type="match status" value="1"/>
</dbReference>
<keyword id="KW-1185">Reference proteome</keyword>
<keyword id="KW-0687">Ribonucleoprotein</keyword>
<keyword id="KW-0689">Ribosomal protein</keyword>
<keyword id="KW-0694">RNA-binding</keyword>
<keyword id="KW-0699">rRNA-binding</keyword>
<feature type="chain" id="PRO_0000176865" description="Small ribosomal subunit protein bS6">
    <location>
        <begin position="1"/>
        <end position="95"/>
    </location>
</feature>
<name>RS6_CALS4</name>
<accession>Q8R6M1</accession>
<gene>
    <name evidence="1" type="primary">rpsF</name>
    <name type="ordered locus">TTE2781</name>
</gene>
<sequence>MRSYETMYVLSPDLNEEERKGLIERFKNLIVERGGEITNFDEWGKRKLAYPIQKKSEGYYVLMNFNSSPDVSRELERVYRITDGVLRYLIIRTDD</sequence>
<proteinExistence type="inferred from homology"/>
<reference key="1">
    <citation type="journal article" date="2002" name="Genome Res.">
        <title>A complete sequence of the T. tengcongensis genome.</title>
        <authorList>
            <person name="Bao Q."/>
            <person name="Tian Y."/>
            <person name="Li W."/>
            <person name="Xu Z."/>
            <person name="Xuan Z."/>
            <person name="Hu S."/>
            <person name="Dong W."/>
            <person name="Yang J."/>
            <person name="Chen Y."/>
            <person name="Xue Y."/>
            <person name="Xu Y."/>
            <person name="Lai X."/>
            <person name="Huang L."/>
            <person name="Dong X."/>
            <person name="Ma Y."/>
            <person name="Ling L."/>
            <person name="Tan H."/>
            <person name="Chen R."/>
            <person name="Wang J."/>
            <person name="Yu J."/>
            <person name="Yang H."/>
        </authorList>
    </citation>
    <scope>NUCLEOTIDE SEQUENCE [LARGE SCALE GENOMIC DNA]</scope>
    <source>
        <strain>DSM 15242 / JCM 11007 / NBRC 100824 / MB4</strain>
    </source>
</reference>
<protein>
    <recommendedName>
        <fullName evidence="1">Small ribosomal subunit protein bS6</fullName>
    </recommendedName>
    <alternativeName>
        <fullName evidence="2">30S ribosomal protein S6</fullName>
    </alternativeName>
</protein>
<organism>
    <name type="scientific">Caldanaerobacter subterraneus subsp. tengcongensis (strain DSM 15242 / JCM 11007 / NBRC 100824 / MB4)</name>
    <name type="common">Thermoanaerobacter tengcongensis</name>
    <dbReference type="NCBI Taxonomy" id="273068"/>
    <lineage>
        <taxon>Bacteria</taxon>
        <taxon>Bacillati</taxon>
        <taxon>Bacillota</taxon>
        <taxon>Clostridia</taxon>
        <taxon>Thermoanaerobacterales</taxon>
        <taxon>Thermoanaerobacteraceae</taxon>
        <taxon>Caldanaerobacter</taxon>
    </lineage>
</organism>